<dbReference type="EC" id="4.1.1.69" evidence="2 3"/>
<dbReference type="EMBL" id="AF331043">
    <property type="protein sequence ID" value="AAK16538.1"/>
    <property type="molecule type" value="Genomic_DNA"/>
</dbReference>
<dbReference type="RefSeq" id="WP_032489995.1">
    <property type="nucleotide sequence ID" value="NZ_AF331043.1"/>
</dbReference>
<dbReference type="SMR" id="Q9AGK2"/>
<dbReference type="BRENDA" id="4.1.1.69">
    <property type="organism ID" value="7076"/>
</dbReference>
<dbReference type="UniPathway" id="UPA00726"/>
<dbReference type="GO" id="GO:0005829">
    <property type="term" value="C:cytosol"/>
    <property type="evidence" value="ECO:0007669"/>
    <property type="project" value="TreeGrafter"/>
</dbReference>
<dbReference type="GO" id="GO:0016832">
    <property type="term" value="F:aldehyde-lyase activity"/>
    <property type="evidence" value="ECO:0007669"/>
    <property type="project" value="TreeGrafter"/>
</dbReference>
<dbReference type="GO" id="GO:0046872">
    <property type="term" value="F:metal ion binding"/>
    <property type="evidence" value="ECO:0007669"/>
    <property type="project" value="UniProtKB-KW"/>
</dbReference>
<dbReference type="GO" id="GO:0019323">
    <property type="term" value="P:pentose catabolic process"/>
    <property type="evidence" value="ECO:0007669"/>
    <property type="project" value="TreeGrafter"/>
</dbReference>
<dbReference type="Gene3D" id="3.40.225.10">
    <property type="entry name" value="Class II aldolase/adducin N-terminal domain"/>
    <property type="match status" value="1"/>
</dbReference>
<dbReference type="InterPro" id="IPR050197">
    <property type="entry name" value="Aldolase_class_II_sugar_metab"/>
</dbReference>
<dbReference type="InterPro" id="IPR001303">
    <property type="entry name" value="Aldolase_II/adducin_N"/>
</dbReference>
<dbReference type="InterPro" id="IPR036409">
    <property type="entry name" value="Aldolase_II/adducin_N_sf"/>
</dbReference>
<dbReference type="PANTHER" id="PTHR22789:SF0">
    <property type="entry name" value="3-OXO-TETRONATE 4-PHOSPHATE DECARBOXYLASE-RELATED"/>
    <property type="match status" value="1"/>
</dbReference>
<dbReference type="PANTHER" id="PTHR22789">
    <property type="entry name" value="FUCULOSE PHOSPHATE ALDOLASE"/>
    <property type="match status" value="1"/>
</dbReference>
<dbReference type="Pfam" id="PF00596">
    <property type="entry name" value="Aldolase_II"/>
    <property type="match status" value="1"/>
</dbReference>
<dbReference type="SMART" id="SM01007">
    <property type="entry name" value="Aldolase_II"/>
    <property type="match status" value="1"/>
</dbReference>
<dbReference type="SUPFAM" id="SSF53639">
    <property type="entry name" value="AraD/HMP-PK domain-like"/>
    <property type="match status" value="1"/>
</dbReference>
<accession>Q9AGK2</accession>
<geneLocation type="plasmid" evidence="7">
    <name>pRE1</name>
</geneLocation>
<gene>
    <name evidence="4" type="primary">phtC</name>
</gene>
<feature type="chain" id="PRO_0000461273" description="3,4-dihydroxyphthalate decarboxylase">
    <location>
        <begin position="1"/>
        <end position="248"/>
    </location>
</feature>
<feature type="active site" description="Proton donor/acceptor" evidence="1">
    <location>
        <position position="90"/>
    </location>
</feature>
<feature type="binding site" evidence="1">
    <location>
        <position position="90"/>
    </location>
    <ligand>
        <name>a divalent metal cation</name>
        <dbReference type="ChEBI" id="CHEBI:60240"/>
    </ligand>
</feature>
<feature type="binding site" evidence="1">
    <location>
        <position position="109"/>
    </location>
    <ligand>
        <name>a divalent metal cation</name>
        <dbReference type="ChEBI" id="CHEBI:60240"/>
    </ligand>
</feature>
<feature type="binding site" evidence="1">
    <location>
        <position position="111"/>
    </location>
    <ligand>
        <name>a divalent metal cation</name>
        <dbReference type="ChEBI" id="CHEBI:60240"/>
    </ligand>
</feature>
<feature type="binding site" evidence="1">
    <location>
        <position position="177"/>
    </location>
    <ligand>
        <name>a divalent metal cation</name>
        <dbReference type="ChEBI" id="CHEBI:60240"/>
    </ligand>
</feature>
<comment type="function">
    <text evidence="2 3">Catalyzes the decarboxylation of 3,4-dihydroxyphthalate to protocatechuate (3,4-dihydroxybenzoate) during phthalate metabolism.</text>
</comment>
<comment type="catalytic activity">
    <reaction evidence="2 3">
        <text>3,4-dihydroxyphthalate + H(+) = 3,4-dihydroxybenzoate + CO2</text>
        <dbReference type="Rhea" id="RHEA:18601"/>
        <dbReference type="ChEBI" id="CHEBI:15378"/>
        <dbReference type="ChEBI" id="CHEBI:16526"/>
        <dbReference type="ChEBI" id="CHEBI:36241"/>
        <dbReference type="ChEBI" id="CHEBI:58137"/>
        <dbReference type="EC" id="4.1.1.69"/>
    </reaction>
    <physiologicalReaction direction="left-to-right" evidence="2 3">
        <dbReference type="Rhea" id="RHEA:18602"/>
    </physiologicalReaction>
</comment>
<comment type="cofactor">
    <cofactor evidence="1">
        <name>a divalent metal cation</name>
        <dbReference type="ChEBI" id="CHEBI:60240"/>
    </cofactor>
</comment>
<comment type="biophysicochemical properties">
    <phDependence>
        <text evidence="3">Optimum pH is 7.</text>
    </phDependence>
</comment>
<comment type="pathway">
    <text evidence="2 3">Xenobiotic degradation; phthalate degradation.</text>
</comment>
<comment type="induction">
    <text evidence="3">Constitutively expressed.</text>
</comment>
<comment type="similarity">
    <text evidence="6">Belongs to the aldolase class II family.</text>
</comment>
<name>DHPDC_ARTKE</name>
<reference evidence="7" key="1">
    <citation type="journal article" date="2001" name="J. Bacteriol.">
        <title>Plasmid-encoded phthalate catabolic pathway in Arthrobacter keyseri 12B.</title>
        <authorList>
            <person name="Eaton R.W."/>
        </authorList>
    </citation>
    <scope>NUCLEOTIDE SEQUENCE [GENOMIC DNA]</scope>
    <scope>FUNCTION</scope>
    <scope>CATALYTIC ACTIVITY</scope>
    <scope>PATHWAY</scope>
    <source>
        <strain>12B</strain>
        <plasmid>pRE1</plasmid>
    </source>
</reference>
<reference key="2">
    <citation type="journal article" date="1982" name="J. Bacteriol.">
        <title>Metabolism of dibutylphthalate and phthalate by Micrococcus sp. strain 12B.</title>
        <authorList>
            <person name="Eaton R.W."/>
            <person name="Ribbons D.W."/>
        </authorList>
    </citation>
    <scope>FUNCTION</scope>
    <scope>CATALYTIC ACTIVITY</scope>
    <scope>BIOPHYSICOCHEMICAL PROPERTIES</scope>
    <scope>PATHWAY</scope>
    <scope>INDUCTION</scope>
    <source>
        <strain>12B</strain>
    </source>
</reference>
<evidence type="ECO:0000250" key="1">
    <source>
        <dbReference type="UniProtKB" id="P0AB87"/>
    </source>
</evidence>
<evidence type="ECO:0000269" key="2">
    <source>
    </source>
</evidence>
<evidence type="ECO:0000269" key="3">
    <source>
    </source>
</evidence>
<evidence type="ECO:0000303" key="4">
    <source>
    </source>
</evidence>
<evidence type="ECO:0000303" key="5">
    <source>
    </source>
</evidence>
<evidence type="ECO:0000305" key="6"/>
<evidence type="ECO:0000312" key="7">
    <source>
        <dbReference type="EMBL" id="AAK16538.1"/>
    </source>
</evidence>
<sequence>MGQTWSPLTHAGAREAIALACRVLAHRGLADGILGHISLRIGENSLLVRCRGPQERGLAFTEASDIRLVDLDGNPAAEGELEGGYSAPNELPLHTELLRQRPDINAVVHAHPPRVVAADLAGLGIRPIVGAFDIPGTRLAAGGVPVYPRGVLVRNRQLAAEMLHAMGDRPVVLLRGHGLTSAAGSVEQAVLQAISVDTLAGLSLQVTSAGGALKDLPDSDMAELPDLGGSFNTQTAWRHELARISAAW</sequence>
<protein>
    <recommendedName>
        <fullName evidence="5">3,4-dihydroxyphthalate decarboxylase</fullName>
        <ecNumber evidence="2 3">4.1.1.69</ecNumber>
    </recommendedName>
</protein>
<keyword id="KW-0456">Lyase</keyword>
<keyword id="KW-0479">Metal-binding</keyword>
<keyword id="KW-0614">Plasmid</keyword>
<proteinExistence type="evidence at protein level"/>
<organism>
    <name type="scientific">Arthrobacter keyseri</name>
    <dbReference type="NCBI Taxonomy" id="122866"/>
    <lineage>
        <taxon>Bacteria</taxon>
        <taxon>Bacillati</taxon>
        <taxon>Actinomycetota</taxon>
        <taxon>Actinomycetes</taxon>
        <taxon>Micrococcales</taxon>
        <taxon>Micrococcaceae</taxon>
        <taxon>Arthrobacter</taxon>
    </lineage>
</organism>